<protein>
    <recommendedName>
        <fullName evidence="1">Hemagglutinin</fullName>
    </recommendedName>
    <component>
        <recommendedName>
            <fullName evidence="1">Hemagglutinin HA1 chain</fullName>
        </recommendedName>
    </component>
    <component>
        <recommendedName>
            <fullName evidence="1">Hemagglutinin HA2 chain</fullName>
        </recommendedName>
    </component>
</protein>
<gene>
    <name evidence="1" type="primary">HA</name>
</gene>
<name>HEMA_I61A0</name>
<comment type="function">
    <text evidence="1">Binds to sialic acid-containing receptors on the cell surface, bringing about the attachment of the virus particle to the cell. This attachment induces virion internalization either through clathrin-dependent endocytosis or through clathrin- and caveolin-independent pathway. Plays a major role in the determination of host range restriction and virulence. Class I viral fusion protein. Responsible for penetration of the virus into the cell cytoplasm by mediating the fusion of the membrane of the endocytosed virus particle with the endosomal membrane. Low pH in endosomes induces an irreversible conformational change in HA2, releasing the fusion hydrophobic peptide. Several trimers are required to form a competent fusion pore.</text>
</comment>
<comment type="subunit">
    <text evidence="1">Homotrimer of disulfide-linked HA1-HA2.</text>
</comment>
<comment type="subcellular location">
    <subcellularLocation>
        <location evidence="1">Virion membrane</location>
        <topology evidence="1">Single-pass type I membrane protein</topology>
    </subcellularLocation>
    <subcellularLocation>
        <location evidence="1">Host apical cell membrane</location>
        <topology evidence="1">Single-pass type I membrane protein</topology>
    </subcellularLocation>
    <text evidence="1">Targeted to the apical plasma membrane in epithelial polarized cells through a signal present in the transmembrane domain. Associated with glycosphingolipid- and cholesterol-enriched detergent-resistant lipid rafts.</text>
</comment>
<comment type="PTM">
    <text evidence="1">Palmitoylated.</text>
</comment>
<comment type="PTM">
    <text evidence="1">In natural infection, inactive HA is matured into HA1 and HA2 outside the cell by one or more trypsin-like, arginine-specific endoprotease secreted by the bronchial epithelial cells. One identified protease that may be involved in this process is secreted in lungs by club cells.</text>
</comment>
<comment type="miscellaneous">
    <text>Major glycoprotein, comprises over 80% of the envelope proteins present in virus particle.</text>
</comment>
<comment type="miscellaneous">
    <text>The extent of infection into host organism is determined by HA. Influenza viruses bud from the apical surface of polarized epithelial cells (e.g. bronchial epithelial cells) into lumen of lungs and are therefore usually pneumotropic. The reason is that HA is cleaved by tryptase clara which is restricted to lungs. However, HAs of H5 and H7 pantropic avian viruses subtypes can be cleaved by furin and subtilisin-type enzymes, allowing the virus to grow in other organs than lungs.</text>
</comment>
<comment type="miscellaneous">
    <text evidence="2">The influenza A genome consist of 8 RNA segments. Genetic variation of hemagglutinin and/or neuraminidase genes results in the emergence of new influenza strains. The mechanism of variation can be the result of point mutations or the result of genetic reassortment between segments of two different strains.</text>
</comment>
<comment type="similarity">
    <text evidence="1">Belongs to the influenza viruses hemagglutinin family.</text>
</comment>
<feature type="signal peptide" evidence="1">
    <location>
        <begin position="1"/>
        <end position="16"/>
    </location>
</feature>
<feature type="chain" id="PRO_0000440396" description="Hemagglutinin" evidence="1">
    <location>
        <begin position="17"/>
        <end position="568"/>
    </location>
</feature>
<feature type="chain" id="PRO_5000144482" description="Hemagglutinin HA1 chain" evidence="1">
    <location>
        <begin position="17"/>
        <end position="345"/>
    </location>
</feature>
<feature type="chain" id="PRO_5000144483" description="Hemagglutinin HA2 chain" evidence="1">
    <location>
        <begin position="347"/>
        <end position="568"/>
    </location>
</feature>
<feature type="topological domain" description="Extracellular" evidence="1">
    <location>
        <begin position="17"/>
        <end position="531"/>
    </location>
</feature>
<feature type="transmembrane region" description="Helical" evidence="1">
    <location>
        <begin position="532"/>
        <end position="552"/>
    </location>
</feature>
<feature type="topological domain" description="Cytoplasmic" evidence="1">
    <location>
        <begin position="553"/>
        <end position="568"/>
    </location>
</feature>
<feature type="site" description="Cleavage; by host" evidence="1">
    <location>
        <begin position="346"/>
        <end position="347"/>
    </location>
</feature>
<feature type="lipid moiety-binding region" description="S-palmitoyl cysteine; by host" evidence="1">
    <location>
        <position position="557"/>
    </location>
</feature>
<feature type="lipid moiety-binding region" description="S-palmitoyl cysteine; by host" evidence="1">
    <location>
        <position position="564"/>
    </location>
</feature>
<feature type="lipid moiety-binding region" description="S-palmitoyl cysteine; by host" evidence="1">
    <location>
        <position position="567"/>
    </location>
</feature>
<feature type="glycosylation site" description="N-linked (GlcNAc...) asparagine; by host" evidence="1">
    <location>
        <position position="26"/>
    </location>
</feature>
<feature type="glycosylation site" description="N-linked (GlcNAc...) asparagine; by host" evidence="1">
    <location>
        <position position="27"/>
    </location>
</feature>
<feature type="glycosylation site" description="N-linked (GlcNAc...) asparagine; by host" evidence="1">
    <location>
        <position position="39"/>
    </location>
</feature>
<feature type="glycosylation site" description="N-linked (GlcNAc...) asparagine; by host" evidence="1">
    <location>
        <position position="181"/>
    </location>
</feature>
<feature type="glycosylation site" description="N-linked (GlcNAc...) asparagine; by host" evidence="1">
    <location>
        <position position="302"/>
    </location>
</feature>
<feature type="glycosylation site" description="N-linked (GlcNAc...) asparagine; by host" evidence="1">
    <location>
        <position position="500"/>
    </location>
</feature>
<feature type="disulfide bond" description="Interchain (between HA1 and HA2 chains)" evidence="1">
    <location>
        <begin position="20"/>
        <end position="483"/>
    </location>
</feature>
<feature type="disulfide bond" evidence="1">
    <location>
        <begin position="58"/>
        <end position="290"/>
    </location>
</feature>
<feature type="disulfide bond" evidence="1">
    <location>
        <begin position="71"/>
        <end position="83"/>
    </location>
</feature>
<feature type="disulfide bond" evidence="1">
    <location>
        <begin position="106"/>
        <end position="151"/>
    </location>
</feature>
<feature type="disulfide bond" evidence="1">
    <location>
        <begin position="294"/>
        <end position="318"/>
    </location>
</feature>
<feature type="disulfide bond" evidence="1">
    <location>
        <begin position="490"/>
        <end position="494"/>
    </location>
</feature>
<dbReference type="EMBL" id="U20460">
    <property type="protein sequence ID" value="AAC54378.1"/>
    <property type="molecule type" value="mRNA"/>
</dbReference>
<dbReference type="SMR" id="Q82509"/>
<dbReference type="GlyCosmos" id="Q82509">
    <property type="glycosylation" value="6 sites, No reported glycans"/>
</dbReference>
<dbReference type="Proteomes" id="UP000101256">
    <property type="component" value="Genome"/>
</dbReference>
<dbReference type="GO" id="GO:0020002">
    <property type="term" value="C:host cell plasma membrane"/>
    <property type="evidence" value="ECO:0007669"/>
    <property type="project" value="UniProtKB-SubCell"/>
</dbReference>
<dbReference type="GO" id="GO:0016020">
    <property type="term" value="C:membrane"/>
    <property type="evidence" value="ECO:0007669"/>
    <property type="project" value="UniProtKB-UniRule"/>
</dbReference>
<dbReference type="GO" id="GO:0019031">
    <property type="term" value="C:viral envelope"/>
    <property type="evidence" value="ECO:0007669"/>
    <property type="project" value="UniProtKB-UniRule"/>
</dbReference>
<dbReference type="GO" id="GO:0055036">
    <property type="term" value="C:virion membrane"/>
    <property type="evidence" value="ECO:0007669"/>
    <property type="project" value="UniProtKB-SubCell"/>
</dbReference>
<dbReference type="GO" id="GO:0046789">
    <property type="term" value="F:host cell surface receptor binding"/>
    <property type="evidence" value="ECO:0007669"/>
    <property type="project" value="UniProtKB-UniRule"/>
</dbReference>
<dbReference type="GO" id="GO:0075512">
    <property type="term" value="P:clathrin-dependent endocytosis of virus by host cell"/>
    <property type="evidence" value="ECO:0007669"/>
    <property type="project" value="UniProtKB-UniRule"/>
</dbReference>
<dbReference type="GO" id="GO:0039654">
    <property type="term" value="P:fusion of virus membrane with host endosome membrane"/>
    <property type="evidence" value="ECO:0007669"/>
    <property type="project" value="UniProtKB-UniRule"/>
</dbReference>
<dbReference type="GO" id="GO:0019064">
    <property type="term" value="P:fusion of virus membrane with host plasma membrane"/>
    <property type="evidence" value="ECO:0007669"/>
    <property type="project" value="InterPro"/>
</dbReference>
<dbReference type="GO" id="GO:0046761">
    <property type="term" value="P:viral budding from plasma membrane"/>
    <property type="evidence" value="ECO:0007669"/>
    <property type="project" value="UniProtKB-UniRule"/>
</dbReference>
<dbReference type="GO" id="GO:0019062">
    <property type="term" value="P:virion attachment to host cell"/>
    <property type="evidence" value="ECO:0007669"/>
    <property type="project" value="UniProtKB-KW"/>
</dbReference>
<dbReference type="FunFam" id="3.90.209.20:FF:000001">
    <property type="entry name" value="Hemagglutinin"/>
    <property type="match status" value="1"/>
</dbReference>
<dbReference type="Gene3D" id="3.90.20.10">
    <property type="match status" value="1"/>
</dbReference>
<dbReference type="Gene3D" id="3.90.209.20">
    <property type="match status" value="1"/>
</dbReference>
<dbReference type="HAMAP" id="MF_04072">
    <property type="entry name" value="INFV_HEMA"/>
    <property type="match status" value="1"/>
</dbReference>
<dbReference type="InterPro" id="IPR008980">
    <property type="entry name" value="Capsid_hemagglutn"/>
</dbReference>
<dbReference type="InterPro" id="IPR013828">
    <property type="entry name" value="Hemagglutn_HA1_a/b_dom_sf"/>
</dbReference>
<dbReference type="InterPro" id="IPR000149">
    <property type="entry name" value="Hemagglutn_influenz_A"/>
</dbReference>
<dbReference type="InterPro" id="IPR001364">
    <property type="entry name" value="Hemagglutn_influenz_A/B"/>
</dbReference>
<dbReference type="Pfam" id="PF00509">
    <property type="entry name" value="Hemagglutinin"/>
    <property type="match status" value="1"/>
</dbReference>
<dbReference type="PRINTS" id="PR00330">
    <property type="entry name" value="HEMAGGLUTN1"/>
</dbReference>
<dbReference type="PRINTS" id="PR00329">
    <property type="entry name" value="HEMAGGLUTN12"/>
</dbReference>
<dbReference type="SUPFAM" id="SSF58064">
    <property type="entry name" value="Influenza hemagglutinin (stalk)"/>
    <property type="match status" value="1"/>
</dbReference>
<dbReference type="SUPFAM" id="SSF49818">
    <property type="entry name" value="Viral protein domain"/>
    <property type="match status" value="1"/>
</dbReference>
<reference key="1">
    <citation type="journal article" date="1995" name="Virology">
        <title>Do hemagglutinin genes of highly pathogenic avian influenza viruses constitute unique phylogenetic lineages?</title>
        <authorList>
            <person name="Rohm C."/>
            <person name="Horimoto T."/>
            <person name="Kawaoka Y."/>
            <person name="Suss J."/>
            <person name="Webster R.G."/>
        </authorList>
    </citation>
    <scope>NUCLEOTIDE SEQUENCE [MRNA]</scope>
</reference>
<organismHost>
    <name type="scientific">Aves</name>
    <dbReference type="NCBI Taxonomy" id="8782"/>
</organismHost>
<proteinExistence type="evidence at transcript level"/>
<keyword id="KW-1167">Clathrin- and caveolin-independent endocytosis of virus by host</keyword>
<keyword id="KW-1165">Clathrin-mediated endocytosis of virus by host</keyword>
<keyword id="KW-1015">Disulfide bond</keyword>
<keyword id="KW-1170">Fusion of virus membrane with host endosomal membrane</keyword>
<keyword id="KW-1168">Fusion of virus membrane with host membrane</keyword>
<keyword id="KW-0325">Glycoprotein</keyword>
<keyword id="KW-0348">Hemagglutinin</keyword>
<keyword id="KW-1032">Host cell membrane</keyword>
<keyword id="KW-1043">Host membrane</keyword>
<keyword id="KW-0945">Host-virus interaction</keyword>
<keyword id="KW-0449">Lipoprotein</keyword>
<keyword id="KW-0472">Membrane</keyword>
<keyword id="KW-0564">Palmitate</keyword>
<keyword id="KW-0732">Signal</keyword>
<keyword id="KW-0812">Transmembrane</keyword>
<keyword id="KW-1133">Transmembrane helix</keyword>
<keyword id="KW-1161">Viral attachment to host cell</keyword>
<keyword id="KW-0261">Viral envelope protein</keyword>
<keyword id="KW-1162">Viral penetration into host cytoplasm</keyword>
<keyword id="KW-0946">Virion</keyword>
<keyword id="KW-1164">Virus endocytosis by host</keyword>
<keyword id="KW-1160">Virus entry into host cell</keyword>
<sequence>MERIVLFLAIVSLVKSDQICIGYHANNSTEQVDTIMEKNVTVTHAQDILEKTHNGKLCSLNGVKPLILRDCSVAGWLLGNPMCDEFLNVPEWSYIVEKDNPINSLCYPGDFNDYEELKHLLSSTNHFEKIQIIPRSSWSNHDASSGVSSACPYNGRSSFFRNVVWLIEKNNAYPTIKRSYNNTNQEDLLILWGIHHPNDAAEQTKLYQNPTTYVSVGTSTLNQRSIPEIATRPKVNGQSGRVEFFWTILKPNDAINFESNGNFIAPEYAYKIVKKGDSAIMKSDLEYGNCNAKCQTPVGAINSSMPFHNIHPLTIGECPKYVKSDRLVLATGLRNVPQRETRRQKRGLFGAIAGFIEGGWQGMVDGWYGYHHSNEQGSGYAADKESTQKAIDGITNKVNSIIDKMNTQFETVGKEFNNLERRIENLNKKMEDGFLDVWTYNAELLVLMENERTLDFHDSNVKNLYDKVRLQLKDNAKELGNGCFEFYHKCDNECMESVRNGTYDYPQYSEEARLNREEISGVKLELMGVYQILSIYSTVASSLALAIMIAGLSFWMCSNGSLQCRICI</sequence>
<accession>Q82509</accession>
<organism>
    <name type="scientific">Influenza A virus (strain A/Tern/South Africa/1961 H5N3)</name>
    <dbReference type="NCBI Taxonomy" id="384510"/>
    <lineage>
        <taxon>Viruses</taxon>
        <taxon>Riboviria</taxon>
        <taxon>Orthornavirae</taxon>
        <taxon>Negarnaviricota</taxon>
        <taxon>Polyploviricotina</taxon>
        <taxon>Insthoviricetes</taxon>
        <taxon>Articulavirales</taxon>
        <taxon>Orthomyxoviridae</taxon>
        <taxon>Alphainfluenzavirus</taxon>
        <taxon>Alphainfluenzavirus influenzae</taxon>
        <taxon>Influenza A virus</taxon>
    </lineage>
</organism>
<evidence type="ECO:0000255" key="1">
    <source>
        <dbReference type="HAMAP-Rule" id="MF_04072"/>
    </source>
</evidence>
<evidence type="ECO:0000305" key="2"/>